<feature type="chain" id="PRO_1000020624" description="tRNA dimethylallyltransferase">
    <location>
        <begin position="1"/>
        <end position="313"/>
    </location>
</feature>
<feature type="region of interest" description="Interaction with substrate tRNA" evidence="1">
    <location>
        <begin position="36"/>
        <end position="39"/>
    </location>
</feature>
<feature type="region of interest" description="Interaction with substrate tRNA" evidence="1">
    <location>
        <begin position="160"/>
        <end position="164"/>
    </location>
</feature>
<feature type="region of interest" description="Interaction with substrate tRNA" evidence="1">
    <location>
        <begin position="243"/>
        <end position="248"/>
    </location>
</feature>
<feature type="binding site" evidence="1">
    <location>
        <begin position="11"/>
        <end position="18"/>
    </location>
    <ligand>
        <name>ATP</name>
        <dbReference type="ChEBI" id="CHEBI:30616"/>
    </ligand>
</feature>
<feature type="binding site" evidence="1">
    <location>
        <begin position="13"/>
        <end position="18"/>
    </location>
    <ligand>
        <name>substrate</name>
    </ligand>
</feature>
<feature type="site" description="Interaction with substrate tRNA" evidence="1">
    <location>
        <position position="102"/>
    </location>
</feature>
<feature type="site" description="Interaction with substrate tRNA" evidence="1">
    <location>
        <position position="124"/>
    </location>
</feature>
<reference key="1">
    <citation type="submission" date="2003-03" db="EMBL/GenBank/DDBJ databases">
        <title>The complete genome sequence of Neisseria gonorrhoeae.</title>
        <authorList>
            <person name="Lewis L.A."/>
            <person name="Gillaspy A.F."/>
            <person name="McLaughlin R.E."/>
            <person name="Gipson M."/>
            <person name="Ducey T.F."/>
            <person name="Ownbey T."/>
            <person name="Hartman K."/>
            <person name="Nydick C."/>
            <person name="Carson M.B."/>
            <person name="Vaughn J."/>
            <person name="Thomson C."/>
            <person name="Song L."/>
            <person name="Lin S."/>
            <person name="Yuan X."/>
            <person name="Najar F."/>
            <person name="Zhan M."/>
            <person name="Ren Q."/>
            <person name="Zhu H."/>
            <person name="Qi S."/>
            <person name="Kenton S.M."/>
            <person name="Lai H."/>
            <person name="White J.D."/>
            <person name="Clifton S."/>
            <person name="Roe B.A."/>
            <person name="Dyer D.W."/>
        </authorList>
    </citation>
    <scope>NUCLEOTIDE SEQUENCE [LARGE SCALE GENOMIC DNA]</scope>
    <source>
        <strain>ATCC 700825 / FA 1090</strain>
    </source>
</reference>
<organism>
    <name type="scientific">Neisseria gonorrhoeae (strain ATCC 700825 / FA 1090)</name>
    <dbReference type="NCBI Taxonomy" id="242231"/>
    <lineage>
        <taxon>Bacteria</taxon>
        <taxon>Pseudomonadati</taxon>
        <taxon>Pseudomonadota</taxon>
        <taxon>Betaproteobacteria</taxon>
        <taxon>Neisseriales</taxon>
        <taxon>Neisseriaceae</taxon>
        <taxon>Neisseria</taxon>
    </lineage>
</organism>
<comment type="function">
    <text evidence="1">Catalyzes the transfer of a dimethylallyl group onto the adenine at position 37 in tRNAs that read codons beginning with uridine, leading to the formation of N6-(dimethylallyl)adenosine (i(6)A).</text>
</comment>
<comment type="catalytic activity">
    <reaction evidence="1">
        <text>adenosine(37) in tRNA + dimethylallyl diphosphate = N(6)-dimethylallyladenosine(37) in tRNA + diphosphate</text>
        <dbReference type="Rhea" id="RHEA:26482"/>
        <dbReference type="Rhea" id="RHEA-COMP:10162"/>
        <dbReference type="Rhea" id="RHEA-COMP:10375"/>
        <dbReference type="ChEBI" id="CHEBI:33019"/>
        <dbReference type="ChEBI" id="CHEBI:57623"/>
        <dbReference type="ChEBI" id="CHEBI:74411"/>
        <dbReference type="ChEBI" id="CHEBI:74415"/>
        <dbReference type="EC" id="2.5.1.75"/>
    </reaction>
</comment>
<comment type="cofactor">
    <cofactor evidence="1">
        <name>Mg(2+)</name>
        <dbReference type="ChEBI" id="CHEBI:18420"/>
    </cofactor>
</comment>
<comment type="subunit">
    <text evidence="1">Monomer.</text>
</comment>
<comment type="similarity">
    <text evidence="1">Belongs to the IPP transferase family.</text>
</comment>
<sequence length="313" mass="34855">MPTPKAFTLLGPTACGKTALALKIAETLPVEIISLDSALLYTGMDIGTAKPSASERAFVPHHLIDIITPVQTYSAARFVEDCTRLTGEITARGKCPLIVGGTMMYFRALTQGLNDLPEADACLRADLDEQKQMYGLDFLYRTLQKVDPETACRLKPNDSQRIGRALEVYYLTGRPMSAHLNGQPEHTLPFELYTAALIPEDRARLHENIALRFHLMLEQGFIGEVENLRRRYPGLTADSPAIRCVGYRQAWEHLDGATDRQTFIEKGIAATRQLAKRQLTWLRKTPLDCVADPFSDGTSGTRLIEAAKRFFGE</sequence>
<keyword id="KW-0067">ATP-binding</keyword>
<keyword id="KW-0460">Magnesium</keyword>
<keyword id="KW-0547">Nucleotide-binding</keyword>
<keyword id="KW-1185">Reference proteome</keyword>
<keyword id="KW-0808">Transferase</keyword>
<keyword id="KW-0819">tRNA processing</keyword>
<protein>
    <recommendedName>
        <fullName evidence="1">tRNA dimethylallyltransferase</fullName>
        <ecNumber evidence="1">2.5.1.75</ecNumber>
    </recommendedName>
    <alternativeName>
        <fullName evidence="1">Dimethylallyl diphosphate:tRNA dimethylallyltransferase</fullName>
        <shortName evidence="1">DMAPP:tRNA dimethylallyltransferase</shortName>
        <shortName evidence="1">DMATase</shortName>
    </alternativeName>
    <alternativeName>
        <fullName evidence="1">Isopentenyl-diphosphate:tRNA isopentenyltransferase</fullName>
        <shortName evidence="1">IPP transferase</shortName>
        <shortName evidence="1">IPPT</shortName>
        <shortName evidence="1">IPTase</shortName>
    </alternativeName>
</protein>
<dbReference type="EC" id="2.5.1.75" evidence="1"/>
<dbReference type="EMBL" id="AE004969">
    <property type="protein sequence ID" value="AAW89635.1"/>
    <property type="molecule type" value="Genomic_DNA"/>
</dbReference>
<dbReference type="RefSeq" id="WP_003698342.1">
    <property type="nucleotide sequence ID" value="NC_002946.2"/>
</dbReference>
<dbReference type="RefSeq" id="YP_208047.1">
    <property type="nucleotide sequence ID" value="NC_002946.2"/>
</dbReference>
<dbReference type="SMR" id="Q5F852"/>
<dbReference type="STRING" id="242231.NGO_0940"/>
<dbReference type="KEGG" id="ngo:NGO_0940"/>
<dbReference type="PATRIC" id="fig|242231.10.peg.1102"/>
<dbReference type="HOGENOM" id="CLU_032616_0_0_4"/>
<dbReference type="Proteomes" id="UP000000535">
    <property type="component" value="Chromosome"/>
</dbReference>
<dbReference type="GO" id="GO:0005524">
    <property type="term" value="F:ATP binding"/>
    <property type="evidence" value="ECO:0007669"/>
    <property type="project" value="UniProtKB-UniRule"/>
</dbReference>
<dbReference type="GO" id="GO:0052381">
    <property type="term" value="F:tRNA dimethylallyltransferase activity"/>
    <property type="evidence" value="ECO:0007669"/>
    <property type="project" value="UniProtKB-UniRule"/>
</dbReference>
<dbReference type="GO" id="GO:0006400">
    <property type="term" value="P:tRNA modification"/>
    <property type="evidence" value="ECO:0007669"/>
    <property type="project" value="TreeGrafter"/>
</dbReference>
<dbReference type="Gene3D" id="1.10.20.140">
    <property type="match status" value="1"/>
</dbReference>
<dbReference type="Gene3D" id="3.40.50.300">
    <property type="entry name" value="P-loop containing nucleotide triphosphate hydrolases"/>
    <property type="match status" value="1"/>
</dbReference>
<dbReference type="HAMAP" id="MF_00185">
    <property type="entry name" value="IPP_trans"/>
    <property type="match status" value="1"/>
</dbReference>
<dbReference type="InterPro" id="IPR039657">
    <property type="entry name" value="Dimethylallyltransferase"/>
</dbReference>
<dbReference type="InterPro" id="IPR018022">
    <property type="entry name" value="IPT"/>
</dbReference>
<dbReference type="InterPro" id="IPR027417">
    <property type="entry name" value="P-loop_NTPase"/>
</dbReference>
<dbReference type="NCBIfam" id="TIGR00174">
    <property type="entry name" value="miaA"/>
    <property type="match status" value="1"/>
</dbReference>
<dbReference type="PANTHER" id="PTHR11088">
    <property type="entry name" value="TRNA DIMETHYLALLYLTRANSFERASE"/>
    <property type="match status" value="1"/>
</dbReference>
<dbReference type="PANTHER" id="PTHR11088:SF60">
    <property type="entry name" value="TRNA DIMETHYLALLYLTRANSFERASE"/>
    <property type="match status" value="1"/>
</dbReference>
<dbReference type="Pfam" id="PF01715">
    <property type="entry name" value="IPPT"/>
    <property type="match status" value="1"/>
</dbReference>
<dbReference type="SUPFAM" id="SSF52540">
    <property type="entry name" value="P-loop containing nucleoside triphosphate hydrolases"/>
    <property type="match status" value="2"/>
</dbReference>
<accession>Q5F852</accession>
<evidence type="ECO:0000255" key="1">
    <source>
        <dbReference type="HAMAP-Rule" id="MF_00185"/>
    </source>
</evidence>
<name>MIAA_NEIG1</name>
<gene>
    <name evidence="1" type="primary">miaA</name>
    <name type="ordered locus">NGO_0940</name>
</gene>
<proteinExistence type="inferred from homology"/>